<feature type="chain" id="PRO_0000198497" description="Ribonuclease P protein component">
    <location>
        <begin position="1"/>
        <end position="121"/>
    </location>
</feature>
<name>RNPA_NEIMA</name>
<comment type="function">
    <text evidence="1">RNaseP catalyzes the removal of the 5'-leader sequence from pre-tRNA to produce the mature 5'-terminus. It can also cleave other RNA substrates such as 4.5S RNA. The protein component plays an auxiliary but essential role in vivo by binding to the 5'-leader sequence and broadening the substrate specificity of the ribozyme.</text>
</comment>
<comment type="catalytic activity">
    <reaction evidence="1">
        <text>Endonucleolytic cleavage of RNA, removing 5'-extranucleotides from tRNA precursor.</text>
        <dbReference type="EC" id="3.1.26.5"/>
    </reaction>
</comment>
<comment type="subunit">
    <text evidence="1">Consists of a catalytic RNA component (M1 or rnpB) and a protein subunit.</text>
</comment>
<comment type="similarity">
    <text evidence="1">Belongs to the RnpA family.</text>
</comment>
<reference key="1">
    <citation type="journal article" date="2000" name="Nature">
        <title>Complete DNA sequence of a serogroup A strain of Neisseria meningitidis Z2491.</title>
        <authorList>
            <person name="Parkhill J."/>
            <person name="Achtman M."/>
            <person name="James K.D."/>
            <person name="Bentley S.D."/>
            <person name="Churcher C.M."/>
            <person name="Klee S.R."/>
            <person name="Morelli G."/>
            <person name="Basham D."/>
            <person name="Brown D."/>
            <person name="Chillingworth T."/>
            <person name="Davies R.M."/>
            <person name="Davis P."/>
            <person name="Devlin K."/>
            <person name="Feltwell T."/>
            <person name="Hamlin N."/>
            <person name="Holroyd S."/>
            <person name="Jagels K."/>
            <person name="Leather S."/>
            <person name="Moule S."/>
            <person name="Mungall K.L."/>
            <person name="Quail M.A."/>
            <person name="Rajandream M.A."/>
            <person name="Rutherford K.M."/>
            <person name="Simmonds M."/>
            <person name="Skelton J."/>
            <person name="Whitehead S."/>
            <person name="Spratt B.G."/>
            <person name="Barrell B.G."/>
        </authorList>
    </citation>
    <scope>NUCLEOTIDE SEQUENCE [LARGE SCALE GENOMIC DNA]</scope>
    <source>
        <strain>DSM 15465 / Z2491</strain>
    </source>
</reference>
<evidence type="ECO:0000255" key="1">
    <source>
        <dbReference type="HAMAP-Rule" id="MF_00227"/>
    </source>
</evidence>
<proteinExistence type="inferred from homology"/>
<gene>
    <name evidence="1" type="primary">rnpA</name>
    <name type="ordered locus">NMA0550</name>
</gene>
<sequence length="121" mass="14288">MDYRFGRQYRLLKTDDFSSVFAFRNRRSRDLLQVSRSNGNGLDHPRIGLVVGKKTAKRANERNYMKRVIRDWFRLNKNRLPPQDFVVRVRRKFDRATAKQARAELAQLMFGNPATGCRKQA</sequence>
<organism>
    <name type="scientific">Neisseria meningitidis serogroup A / serotype 4A (strain DSM 15465 / Z2491)</name>
    <dbReference type="NCBI Taxonomy" id="122587"/>
    <lineage>
        <taxon>Bacteria</taxon>
        <taxon>Pseudomonadati</taxon>
        <taxon>Pseudomonadota</taxon>
        <taxon>Betaproteobacteria</taxon>
        <taxon>Neisseriales</taxon>
        <taxon>Neisseriaceae</taxon>
        <taxon>Neisseria</taxon>
    </lineage>
</organism>
<accession>Q9JW46</accession>
<accession>A1IQ01</accession>
<protein>
    <recommendedName>
        <fullName evidence="1">Ribonuclease P protein component</fullName>
        <shortName evidence="1">RNase P protein</shortName>
        <shortName evidence="1">RNaseP protein</shortName>
        <ecNumber evidence="1">3.1.26.5</ecNumber>
    </recommendedName>
    <alternativeName>
        <fullName evidence="1">Protein C5</fullName>
    </alternativeName>
</protein>
<dbReference type="EC" id="3.1.26.5" evidence="1"/>
<dbReference type="EMBL" id="AL157959">
    <property type="protein sequence ID" value="CAM07826.1"/>
    <property type="molecule type" value="Genomic_DNA"/>
</dbReference>
<dbReference type="PIR" id="F81973">
    <property type="entry name" value="F81973"/>
</dbReference>
<dbReference type="RefSeq" id="WP_002224103.1">
    <property type="nucleotide sequence ID" value="NC_003116.1"/>
</dbReference>
<dbReference type="SMR" id="Q9JW46"/>
<dbReference type="EnsemblBacteria" id="CAM07826">
    <property type="protein sequence ID" value="CAM07826"/>
    <property type="gene ID" value="NMA0550"/>
</dbReference>
<dbReference type="GeneID" id="93386809"/>
<dbReference type="KEGG" id="nma:NMA0550"/>
<dbReference type="HOGENOM" id="CLU_117179_11_2_4"/>
<dbReference type="Proteomes" id="UP000000626">
    <property type="component" value="Chromosome"/>
</dbReference>
<dbReference type="GO" id="GO:0030677">
    <property type="term" value="C:ribonuclease P complex"/>
    <property type="evidence" value="ECO:0007669"/>
    <property type="project" value="TreeGrafter"/>
</dbReference>
<dbReference type="GO" id="GO:0042781">
    <property type="term" value="F:3'-tRNA processing endoribonuclease activity"/>
    <property type="evidence" value="ECO:0007669"/>
    <property type="project" value="TreeGrafter"/>
</dbReference>
<dbReference type="GO" id="GO:0004526">
    <property type="term" value="F:ribonuclease P activity"/>
    <property type="evidence" value="ECO:0007669"/>
    <property type="project" value="UniProtKB-UniRule"/>
</dbReference>
<dbReference type="GO" id="GO:0000049">
    <property type="term" value="F:tRNA binding"/>
    <property type="evidence" value="ECO:0007669"/>
    <property type="project" value="UniProtKB-UniRule"/>
</dbReference>
<dbReference type="GO" id="GO:0001682">
    <property type="term" value="P:tRNA 5'-leader removal"/>
    <property type="evidence" value="ECO:0007669"/>
    <property type="project" value="UniProtKB-UniRule"/>
</dbReference>
<dbReference type="FunFam" id="3.30.230.10:FF:000083">
    <property type="entry name" value="Ribonuclease P protein component"/>
    <property type="match status" value="1"/>
</dbReference>
<dbReference type="Gene3D" id="3.30.230.10">
    <property type="match status" value="1"/>
</dbReference>
<dbReference type="HAMAP" id="MF_00227">
    <property type="entry name" value="RNase_P"/>
    <property type="match status" value="1"/>
</dbReference>
<dbReference type="InterPro" id="IPR020568">
    <property type="entry name" value="Ribosomal_Su5_D2-typ_SF"/>
</dbReference>
<dbReference type="InterPro" id="IPR014721">
    <property type="entry name" value="Ribsml_uS5_D2-typ_fold_subgr"/>
</dbReference>
<dbReference type="InterPro" id="IPR000100">
    <property type="entry name" value="RNase_P"/>
</dbReference>
<dbReference type="InterPro" id="IPR020539">
    <property type="entry name" value="RNase_P_CS"/>
</dbReference>
<dbReference type="NCBIfam" id="TIGR00188">
    <property type="entry name" value="rnpA"/>
    <property type="match status" value="1"/>
</dbReference>
<dbReference type="PANTHER" id="PTHR33992">
    <property type="entry name" value="RIBONUCLEASE P PROTEIN COMPONENT"/>
    <property type="match status" value="1"/>
</dbReference>
<dbReference type="PANTHER" id="PTHR33992:SF1">
    <property type="entry name" value="RIBONUCLEASE P PROTEIN COMPONENT"/>
    <property type="match status" value="1"/>
</dbReference>
<dbReference type="Pfam" id="PF00825">
    <property type="entry name" value="Ribonuclease_P"/>
    <property type="match status" value="1"/>
</dbReference>
<dbReference type="SUPFAM" id="SSF54211">
    <property type="entry name" value="Ribosomal protein S5 domain 2-like"/>
    <property type="match status" value="1"/>
</dbReference>
<dbReference type="PROSITE" id="PS00648">
    <property type="entry name" value="RIBONUCLEASE_P"/>
    <property type="match status" value="1"/>
</dbReference>
<keyword id="KW-0255">Endonuclease</keyword>
<keyword id="KW-0378">Hydrolase</keyword>
<keyword id="KW-0540">Nuclease</keyword>
<keyword id="KW-0694">RNA-binding</keyword>
<keyword id="KW-0819">tRNA processing</keyword>